<gene>
    <name type="primary">ADR</name>
</gene>
<reference key="1">
    <citation type="journal article" date="1993" name="Biochem. Biophys. Res. Commun.">
        <title>Molecular cloning of a cDNA encoding the precursor of adenoregulin from frog skin. Relationships with the vertebrate defensive peptides, dermaseptins.</title>
        <authorList>
            <person name="Amiche M."/>
            <person name="Ducancel F."/>
            <person name="Lajeunesse E."/>
            <person name="Boulain J.-C."/>
            <person name="Menez A."/>
            <person name="Nicolas P."/>
        </authorList>
    </citation>
    <scope>NUCLEOTIDE SEQUENCE [MRNA]</scope>
    <source>
        <tissue>Skin</tissue>
    </source>
</reference>
<reference key="2">
    <citation type="journal article" date="1992" name="Proc. Natl. Acad. Sci. U.S.A.">
        <title>Frog secretions and hunting magic in the upper Amazon: identification of a peptide that interacts with an adenosine receptor.</title>
        <authorList>
            <person name="Daly J.W."/>
            <person name="Caceres J."/>
            <person name="Moni R.W."/>
            <person name="Gusovsky F."/>
            <person name="Moos M. Jr."/>
            <person name="Seamon K.B."/>
            <person name="Milton K."/>
            <person name="Myers C.W."/>
        </authorList>
    </citation>
    <scope>PROTEIN SEQUENCE OF 46-78</scope>
    <scope>FUNCTION</scope>
    <scope>SUBCELLULAR LOCATION</scope>
    <scope>MASS SPECTROMETRY</scope>
    <scope>SYNTHESIS OF 46-78</scope>
    <source>
        <tissue>Skin secretion</tissue>
    </source>
</reference>
<reference key="3">
    <citation type="journal article" date="1994" name="Cell. Mol. Neurobiol.">
        <title>Effects of the amphiphilic peptides mastoparan and adenoregulin on receptor binding, G proteins, phosphoinositide breakdown, cyclic AMP generation, and calcium influx.</title>
        <authorList>
            <person name="Shin Y."/>
            <person name="Moni R.W."/>
            <person name="Lueders J.E."/>
            <person name="Daly J.W."/>
        </authorList>
    </citation>
    <scope>FUNCTION</scope>
</reference>
<reference key="4">
    <citation type="journal article" date="1994" name="Eur. J. Biochem.">
        <title>Isolation and structure of novel defensive peptides from frog skin.</title>
        <authorList>
            <person name="Mor A."/>
            <person name="Nicolas P."/>
        </authorList>
    </citation>
    <scope>IDENTIFICATION</scope>
    <scope>FUNCTION</scope>
    <source>
        <tissue>Skin</tissue>
    </source>
</reference>
<reference key="5">
    <citation type="journal article" date="1995" name="Cell. Mol. Neurobiol.">
        <title>The amphiphilic peptide adenoregulin enhances agonist binding to A1-adenosine receptors and 35SGTP gamma S to brain membranes.</title>
        <authorList>
            <person name="Moni R.W."/>
            <person name="Romero F.S."/>
            <person name="Daly J.W."/>
        </authorList>
    </citation>
    <scope>FUNCTION</scope>
</reference>
<reference key="6">
    <citation type="journal article" date="2003" name="Eur. J. Biochem.">
        <title>Antimicrobial peptides from hylid and ranin frogs originated from a 150-million-year-old ancestral precursor with a conserved signal peptide but a hypermutable antimicrobial domain.</title>
        <authorList>
            <person name="Vanhoye D."/>
            <person name="Bruston F."/>
            <person name="Nicolas P."/>
            <person name="Amiche M."/>
        </authorList>
    </citation>
    <scope>FUNCTION</scope>
    <scope>SYNTHESIS OF 46-78</scope>
</reference>
<reference key="7">
    <citation type="journal article" date="2005" name="Protein Expr. Purif.">
        <title>Expression and purification of antimicrobial peptide adenoregulin with C-amidated terminus in Escherichia coli.</title>
        <authorList>
            <person name="Cao W."/>
            <person name="Zhou Y."/>
            <person name="Ma Y."/>
            <person name="Luo Q."/>
            <person name="Wei D."/>
        </authorList>
    </citation>
    <scope>AMIDATION AT VAL-78</scope>
</reference>
<reference key="8">
    <citation type="journal article" date="2006" name="Biochemistry">
        <title>Dermaseptin S9, an alpha-helical antimicrobial peptide with a hydrophobic core and cationic termini.</title>
        <authorList>
            <person name="Lequin O."/>
            <person name="Ladram A."/>
            <person name="Chabbert L."/>
            <person name="Bruston F."/>
            <person name="Convert O."/>
            <person name="Vanhoye D."/>
            <person name="Chassaing G."/>
            <person name="Nicolas P."/>
            <person name="Amiche M."/>
        </authorList>
    </citation>
    <scope>FUNCTION</scope>
</reference>
<reference key="9">
    <citation type="journal article" date="2008" name="FEBS J.">
        <title>Structural requirements for antimicrobial versus chemoattractant activities for dermaseptin S9.</title>
        <authorList>
            <person name="Auvynet C."/>
            <person name="El Amri C."/>
            <person name="Lacombe C."/>
            <person name="Bruston F."/>
            <person name="Bourdais J."/>
            <person name="Nicolas P."/>
            <person name="Rosenstein Y."/>
        </authorList>
    </citation>
    <scope>FUNCTION</scope>
</reference>
<reference key="10">
    <citation type="journal article" date="2008" name="Peptides">
        <title>A consistent nomenclature of antimicrobial peptides isolated from frogs of the subfamily Phyllomedusinae.</title>
        <authorList>
            <person name="Amiche M."/>
            <person name="Ladram A."/>
            <person name="Nicolas P."/>
        </authorList>
    </citation>
    <scope>NOMENCLATURE</scope>
</reference>
<reference key="11">
    <citation type="journal article" date="2009" name="Biochemistry">
        <title>Mechanism of antibacterial action of dermaseptin B2: interplay between helix-hinge-helix structure and membrane curvature strain.</title>
        <authorList>
            <person name="Galanth C."/>
            <person name="Abbassi F."/>
            <person name="Lequin O."/>
            <person name="Ayala-Sanmartin J."/>
            <person name="Ladram A."/>
            <person name="Nicolas P."/>
            <person name="Amiche M."/>
        </authorList>
    </citation>
    <scope>STRUCTURE BY NMR OF 46-78 AND 46-68 IN SDS MICELLES</scope>
    <scope>FUNCTION</scope>
    <scope>MECHANISM OF ACTION</scope>
    <scope>SUBCELLULAR LOCATION</scope>
    <scope>MUTAGENESIS OF 69-ALA--GLN-81</scope>
    <scope>SYNTHESIS OF 46-78 AND 46-68</scope>
</reference>
<comment type="function">
    <text evidence="3 4 6 7 8 9 10 11">Cationic amphipathic alpha-helical antimicrobial peptide with potent activity against Gram-negative and Gram-positive bacteria, fungi and protozoa (PubMed:12709067, PubMed:16401077, PubMed:18637027, PubMed:19113844, PubMed:8306981). Acts in a synergistic effect in combination with Plasticin-B1 at doses that are not active alone (PubMed:12709067). Acts by disturbing membrane functions (PubMed:19113844). On model membranes, induces a strong perturbation of anionic lipid bilayers, resides at the hydrocarbon core-water interface, parallel to the plane of the membrane, and interacts preferentially with the polar head groups and glycerol backbone region of the anionic phospholipids, as well as the region of the lipid acyl chain near the bilayer surface (PubMed:19113844). Induces a positive curvature of the bilayer and clustering of anionic lipids, consistent with a carpet mechanism, that may lead to the formation of mixed peptide-phospholipid toroidal, transient pores and membrane permeation/disruption once a threshold peptide accumulation is reached (PubMed:19113844). Also enhances binding of agonists to adenosine A1 receptors (ADORA1), adenosine A2a receptors (ADORA2A), alpha-2 adrenergic receptors (ADRA2A) and 5-hydroxytryptamine 1A receptors (HTR1A) (PubMed:1438301, PubMed:8565049). In addition, it enhances guanyl nucleotide exchange which may result in the conversion of receptors to a high affinity state complexed with guanyl nucleotide free G-protein (PubMed:7842473). Affects human behavior eliciting profound malaise, followed by listlessness and then euphoria. Does not show cytotoxic activity on CHO cells (PubMed:19113844). Does not act as a chemoattractant (PubMed:18637027). Does not show hemolytic activity (PubMed:19113844, PubMed:8306981).</text>
</comment>
<comment type="subcellular location">
    <subcellularLocation>
        <location evidence="4">Secreted</location>
    </subcellularLocation>
    <subcellularLocation>
        <location evidence="8">Target cell membrane</location>
    </subcellularLocation>
    <text evidence="8">Firstly parallelly oriented to the membrane surface, the peptide may mix to phospholipids, forming toroidal and transient pores in the membrane.</text>
</comment>
<comment type="tissue specificity">
    <text evidence="18">Expressed by the skin glands.</text>
</comment>
<comment type="domain">
    <text evidence="8">Has a helix-hinge-helix structural motif.</text>
</comment>
<comment type="PTM">
    <text evidence="5">Amidation permits an increased antimicrobial activity against some microorganisms such as T.album and S.cerevisiae.</text>
</comment>
<comment type="PTM">
    <text evidence="18">May contain a D-amino acid residue, since the natural peptide is not identical in chromatographic properties to the synthetic peptide.</text>
</comment>
<comment type="mass spectrometry"/>
<comment type="similarity">
    <text evidence="17">Belongs to the frog skin active peptide (FSAP) family. Dermaseptin subfamily.</text>
</comment>
<comment type="online information" name="The antimicrobial peptide database">
    <link uri="https://wangapd3.com/database/query_output.php?ID=0001"/>
</comment>
<comment type="online information" name="The data repository of antimicrobial peptides (DRAMP)">
    <link uri="http://dramp.cpu-bioinfor.org/browse/All_Information.php?id=DRAMP01646&amp;dataset=General"/>
</comment>
<sequence>MAFLKKSLFLVLFLGLVSLSICEEEKRENEDEEEQEDDEQSEMKRGLWSKIKEVGKEAAKAAAKAAGKAALGAVSEAVGEQ</sequence>
<protein>
    <recommendedName>
        <fullName evidence="13 14">Dermaseptin-B2</fullName>
        <shortName evidence="13 14">DRS-B2</shortName>
    </recommendedName>
    <alternativeName>
        <fullName evidence="12 16">Adenoregulin</fullName>
    </alternativeName>
    <alternativeName>
        <fullName evidence="15">Dermaseptin BII</fullName>
    </alternativeName>
</protein>
<name>DRS2_PHYBI</name>
<keyword id="KW-0027">Amidation</keyword>
<keyword id="KW-0878">Amphibian defense peptide</keyword>
<keyword id="KW-0044">Antibiotic</keyword>
<keyword id="KW-0929">Antimicrobial</keyword>
<keyword id="KW-0165">Cleavage on pair of basic residues</keyword>
<keyword id="KW-0903">Direct protein sequencing</keyword>
<keyword id="KW-0295">Fungicide</keyword>
<keyword id="KW-0391">Immunity</keyword>
<keyword id="KW-0399">Innate immunity</keyword>
<keyword id="KW-0472">Membrane</keyword>
<keyword id="KW-0964">Secreted</keyword>
<keyword id="KW-0732">Signal</keyword>
<keyword id="KW-1052">Target cell membrane</keyword>
<keyword id="KW-1053">Target membrane</keyword>
<accession>P31107</accession>
<accession>P80283</accession>
<evidence type="ECO:0000255" key="1"/>
<evidence type="ECO:0000256" key="2">
    <source>
        <dbReference type="SAM" id="MobiDB-lite"/>
    </source>
</evidence>
<evidence type="ECO:0000269" key="3">
    <source>
    </source>
</evidence>
<evidence type="ECO:0000269" key="4">
    <source>
    </source>
</evidence>
<evidence type="ECO:0000269" key="5">
    <source>
    </source>
</evidence>
<evidence type="ECO:0000269" key="6">
    <source>
    </source>
</evidence>
<evidence type="ECO:0000269" key="7">
    <source>
    </source>
</evidence>
<evidence type="ECO:0000269" key="8">
    <source>
    </source>
</evidence>
<evidence type="ECO:0000269" key="9">
    <source>
    </source>
</evidence>
<evidence type="ECO:0000269" key="10">
    <source>
    </source>
</evidence>
<evidence type="ECO:0000269" key="11">
    <source>
    </source>
</evidence>
<evidence type="ECO:0000303" key="12">
    <source>
    </source>
</evidence>
<evidence type="ECO:0000303" key="13">
    <source>
    </source>
</evidence>
<evidence type="ECO:0000303" key="14">
    <source>
    </source>
</evidence>
<evidence type="ECO:0000303" key="15">
    <source>
    </source>
</evidence>
<evidence type="ECO:0000303" key="16">
    <source>
    </source>
</evidence>
<evidence type="ECO:0000305" key="17"/>
<evidence type="ECO:0000305" key="18">
    <source>
    </source>
</evidence>
<evidence type="ECO:0000305" key="19">
    <source>
    </source>
</evidence>
<proteinExistence type="evidence at protein level"/>
<feature type="signal peptide" evidence="1">
    <location>
        <begin position="1"/>
        <end position="22"/>
    </location>
</feature>
<feature type="propeptide" id="PRO_0000007092" evidence="18">
    <location>
        <begin position="23"/>
        <end position="43"/>
    </location>
</feature>
<feature type="peptide" id="PRO_0000007093" description="Dermaseptin-B2" evidence="4">
    <location>
        <begin position="46"/>
        <end position="78"/>
    </location>
</feature>
<feature type="propeptide" id="PRO_0000007094" evidence="18">
    <location>
        <begin position="80"/>
        <end position="81"/>
    </location>
</feature>
<feature type="region of interest" description="Disordered" evidence="2">
    <location>
        <begin position="24"/>
        <end position="46"/>
    </location>
</feature>
<feature type="region of interest" description="Hinge region that separates the two alpha-helices that constitute the peptide" evidence="8">
    <location>
        <begin position="54"/>
        <end position="55"/>
    </location>
</feature>
<feature type="compositionally biased region" description="Acidic residues" evidence="2">
    <location>
        <begin position="30"/>
        <end position="40"/>
    </location>
</feature>
<feature type="modified residue" description="Valine amide" evidence="19">
    <location>
        <position position="78"/>
    </location>
</feature>
<feature type="mutagenesis site" description="Loss of antibacterial activity. Loss of the hinge region, the shortened peptide is constituted by only one alpha-helix. Retains cationic charges of the full-length peptide." evidence="8">
    <location>
        <begin position="69"/>
        <end position="81"/>
    </location>
</feature>
<dbReference type="EMBL" id="X70278">
    <property type="protein sequence ID" value="CAA49763.1"/>
    <property type="molecule type" value="mRNA"/>
</dbReference>
<dbReference type="PIR" id="JN0462">
    <property type="entry name" value="JN0462"/>
</dbReference>
<dbReference type="SMR" id="P31107"/>
<dbReference type="GO" id="GO:0005576">
    <property type="term" value="C:extracellular region"/>
    <property type="evidence" value="ECO:0000314"/>
    <property type="project" value="UniProtKB"/>
</dbReference>
<dbReference type="GO" id="GO:0016020">
    <property type="term" value="C:membrane"/>
    <property type="evidence" value="ECO:0007669"/>
    <property type="project" value="UniProtKB-KW"/>
</dbReference>
<dbReference type="GO" id="GO:0044218">
    <property type="term" value="C:other organism cell membrane"/>
    <property type="evidence" value="ECO:0007669"/>
    <property type="project" value="UniProtKB-KW"/>
</dbReference>
<dbReference type="GO" id="GO:0005085">
    <property type="term" value="F:guanyl-nucleotide exchange factor activity"/>
    <property type="evidence" value="ECO:0000314"/>
    <property type="project" value="UniProtKB"/>
</dbReference>
<dbReference type="GO" id="GO:0050832">
    <property type="term" value="P:defense response to fungus"/>
    <property type="evidence" value="ECO:0000314"/>
    <property type="project" value="UniProtKB"/>
</dbReference>
<dbReference type="GO" id="GO:0050829">
    <property type="term" value="P:defense response to Gram-negative bacterium"/>
    <property type="evidence" value="ECO:0000314"/>
    <property type="project" value="UniProtKB"/>
</dbReference>
<dbReference type="GO" id="GO:0050830">
    <property type="term" value="P:defense response to Gram-positive bacterium"/>
    <property type="evidence" value="ECO:0000314"/>
    <property type="project" value="UniProtKB"/>
</dbReference>
<dbReference type="GO" id="GO:0045087">
    <property type="term" value="P:innate immune response"/>
    <property type="evidence" value="ECO:0007669"/>
    <property type="project" value="UniProtKB-KW"/>
</dbReference>
<dbReference type="GO" id="GO:0031640">
    <property type="term" value="P:killing of cells of another organism"/>
    <property type="evidence" value="ECO:0007669"/>
    <property type="project" value="UniProtKB-KW"/>
</dbReference>
<dbReference type="InterPro" id="IPR022731">
    <property type="entry name" value="Dermaseptin_dom"/>
</dbReference>
<dbReference type="InterPro" id="IPR004275">
    <property type="entry name" value="Frog_antimicrobial_propeptide"/>
</dbReference>
<dbReference type="Pfam" id="PF12121">
    <property type="entry name" value="DD_K"/>
    <property type="match status" value="1"/>
</dbReference>
<dbReference type="Pfam" id="PF03032">
    <property type="entry name" value="FSAP_sig_propep"/>
    <property type="match status" value="1"/>
</dbReference>
<organism>
    <name type="scientific">Phyllomedusa bicolor</name>
    <name type="common">Two-colored leaf frog</name>
    <name type="synonym">Rana bicolor</name>
    <dbReference type="NCBI Taxonomy" id="8393"/>
    <lineage>
        <taxon>Eukaryota</taxon>
        <taxon>Metazoa</taxon>
        <taxon>Chordata</taxon>
        <taxon>Craniata</taxon>
        <taxon>Vertebrata</taxon>
        <taxon>Euteleostomi</taxon>
        <taxon>Amphibia</taxon>
        <taxon>Batrachia</taxon>
        <taxon>Anura</taxon>
        <taxon>Neobatrachia</taxon>
        <taxon>Hyloidea</taxon>
        <taxon>Hylidae</taxon>
        <taxon>Phyllomedusinae</taxon>
        <taxon>Phyllomedusa</taxon>
    </lineage>
</organism>